<comment type="function">
    <text evidence="4 6 9">Orphan nuclear receptor that binds to a response element containing the sequence 5'-TCAAGGTCA-3' (PubMed:11702949, PubMed:27984042, PubMed:7854358). Acts as a regulator of embryonic stem cell pluripotency by mediating repression of POU5F1/OCT4: binds to the DR0 element within the POU5F1/OCT4 promoter and inhibits POU5F1/OCT4 expression during embryonic stem cell differentiation (PubMed:11702949, PubMed:27984042). Required to restrict POU5F1/OCT4 expression to the germ cell lineage (PubMed:11702949). Involved in the regulation of gene expression in germ cell development during gametogenesis (PubMed:7854358).</text>
</comment>
<comment type="subunit">
    <text evidence="5 6 7">Homodimer (PubMed:27984042). Interacts with UIMC1 (PubMed:12080054, PubMed:7760852).</text>
</comment>
<comment type="subcellular location">
    <subcellularLocation>
        <location evidence="12">Nucleus</location>
    </subcellularLocation>
</comment>
<comment type="alternative products">
    <event type="alternative splicing"/>
    <isoform>
        <id>Q64249-1</id>
        <name>1</name>
        <sequence type="displayed"/>
    </isoform>
    <isoform>
        <id>Q64249-2</id>
        <name>2</name>
        <sequence type="described" ref="VSP_025929 VSP_025931"/>
    </isoform>
    <isoform>
        <id>Q64249-3</id>
        <name>3</name>
        <sequence type="described" ref="VSP_025928 VSP_025930"/>
    </isoform>
</comment>
<comment type="tissue specificity">
    <text evidence="8 9">Expressed in the germ cells of both the adult testis and ovary, being most abundant in spermatids.</text>
</comment>
<comment type="similarity">
    <text evidence="12">Belongs to the nuclear hormone receptor family. NR6 subfamily.</text>
</comment>
<name>NR6A1_MOUSE</name>
<reference key="1">
    <citation type="journal article" date="1994" name="Mol. Endocrinol.">
        <title>Cloning of a novel orphan receptor (GCNF) expressed during germ cell development.</title>
        <authorList>
            <person name="Chen F."/>
            <person name="Cooney A.J."/>
            <person name="Wang Y."/>
            <person name="Law S.W."/>
            <person name="O'Malley B.W."/>
        </authorList>
    </citation>
    <scope>NUCLEOTIDE SEQUENCE [MRNA] (ISOFORM 1)</scope>
    <scope>FUNCTION</scope>
    <scope>DNA-BINDING</scope>
    <scope>HOMODIMERIZATION</scope>
    <scope>TISSUE SPECIFICITY</scope>
    <source>
        <strain>BALB/cJ</strain>
        <tissue>Testis</tissue>
    </source>
</reference>
<reference key="2">
    <citation type="journal article" date="1995" name="Gene">
        <title>RTR: a new member of the nuclear receptor superfamily that is highly expressed in murine testis.</title>
        <authorList>
            <person name="Hirose T."/>
            <person name="O'Brien D.A."/>
            <person name="Jetten A.M."/>
        </authorList>
    </citation>
    <scope>NUCLEOTIDE SEQUENCE [MRNA] (ISOFORM 1)</scope>
    <scope>TISSUE SPECIFICITY</scope>
    <source>
        <strain>CD-1</strain>
        <tissue>Testis</tissue>
    </source>
</reference>
<reference key="3">
    <citation type="journal article" date="2000" name="Genome Biol.">
        <title>Genomic structure of the gene for mouse germ cell nuclear factor (GCNF).</title>
        <authorList>
            <person name="Suesens U."/>
            <person name="Borgmeyer U."/>
        </authorList>
    </citation>
    <scope>NUCLEOTIDE SEQUENCE [GENOMIC DNA]</scope>
    <source>
        <strain>129/SvJ</strain>
        <tissue>Liver</tissue>
    </source>
</reference>
<reference key="4">
    <citation type="journal article" date="2003" name="Biol. Reprod.">
        <title>Analysis of germ cell nuclear factor transcripts and protein expression during spermatogenesis.</title>
        <authorList>
            <person name="Yang G."/>
            <person name="Zhang Y.-L."/>
            <person name="Buchold G.M."/>
            <person name="Jetten A.M."/>
            <person name="O'Brien D.A."/>
        </authorList>
    </citation>
    <scope>NUCLEOTIDE SEQUENCE [GENOMIC DNA]</scope>
    <source>
        <strain>129/Ola</strain>
        <tissue>Testis</tissue>
    </source>
</reference>
<reference key="5">
    <citation type="journal article" date="2009" name="PLoS Biol.">
        <title>Lineage-specific biology revealed by a finished genome assembly of the mouse.</title>
        <authorList>
            <person name="Church D.M."/>
            <person name="Goodstadt L."/>
            <person name="Hillier L.W."/>
            <person name="Zody M.C."/>
            <person name="Goldstein S."/>
            <person name="She X."/>
            <person name="Bult C.J."/>
            <person name="Agarwala R."/>
            <person name="Cherry J.L."/>
            <person name="DiCuccio M."/>
            <person name="Hlavina W."/>
            <person name="Kapustin Y."/>
            <person name="Meric P."/>
            <person name="Maglott D."/>
            <person name="Birtle Z."/>
            <person name="Marques A.C."/>
            <person name="Graves T."/>
            <person name="Zhou S."/>
            <person name="Teague B."/>
            <person name="Potamousis K."/>
            <person name="Churas C."/>
            <person name="Place M."/>
            <person name="Herschleb J."/>
            <person name="Runnheim R."/>
            <person name="Forrest D."/>
            <person name="Amos-Landgraf J."/>
            <person name="Schwartz D.C."/>
            <person name="Cheng Z."/>
            <person name="Lindblad-Toh K."/>
            <person name="Eichler E.E."/>
            <person name="Ponting C.P."/>
        </authorList>
    </citation>
    <scope>NUCLEOTIDE SEQUENCE [LARGE SCALE GENOMIC DNA]</scope>
    <source>
        <strain>C57BL/6J</strain>
    </source>
</reference>
<reference key="6">
    <citation type="journal article" date="1995" name="Mol. Endocrinol.">
        <title>Isolation of proteins that interact specifically with the retinoid X receptor: two novel orphan receptors.</title>
        <authorList>
            <person name="Seol W."/>
            <person name="Choi H.S."/>
            <person name="Moore D.D."/>
        </authorList>
    </citation>
    <scope>INTERACTION WITH UIMC1</scope>
</reference>
<reference key="7">
    <citation type="journal article" date="1996" name="Mech. Dev.">
        <title>xGCNF, a nuclear orphan receptor is expressed during neurulation in Xenopus laevis.</title>
        <authorList>
            <person name="Joos T.O."/>
            <person name="David R."/>
            <person name="Dreyer C."/>
        </authorList>
    </citation>
    <scope>DNA-BINDING</scope>
    <scope>HOMODIMERIZATION</scope>
</reference>
<reference key="8">
    <citation type="journal article" date="2001" name="Dev. Cell">
        <title>Mouse germline restriction of Oct4 expression by germ cell nuclear factor.</title>
        <authorList>
            <person name="Fuhrmann G."/>
            <person name="Chung A.C."/>
            <person name="Jackson K.J."/>
            <person name="Hummelke G."/>
            <person name="Baniahmad A."/>
            <person name="Sutter J."/>
            <person name="Sylvester I."/>
            <person name="Schoeler H.R."/>
            <person name="Cooney A.J."/>
        </authorList>
    </citation>
    <scope>FUNCTION</scope>
</reference>
<reference key="9">
    <citation type="journal article" date="2002" name="J. Biol. Chem.">
        <title>RAP80: a novel nuclear protein that interacts with the retinoid-related testis-associated receptor.</title>
        <authorList>
            <person name="Yan Z."/>
            <person name="Kim Y.-S."/>
            <person name="Jetten A.M."/>
        </authorList>
    </citation>
    <scope>INTERACTION WITH UIMC1</scope>
    <scope>MUTAGENESIS OF 246-SER-TYR-247; 254-LEU-PRO-255 AND 265-SER-TYR-266</scope>
</reference>
<reference evidence="13" key="10">
    <citation type="journal article" date="2016" name="J. Mol. Biol.">
        <title>A Structural investigation into Oct4 regulation by orphan nuclear receptors, germ cell nuclear factor (GCNF), and liver receptor homolog-1 (LRH-1).</title>
        <authorList>
            <person name="Weikum E.R."/>
            <person name="Tuntland M.L."/>
            <person name="Murphy M.N."/>
            <person name="Ortlund E.A."/>
        </authorList>
    </citation>
    <scope>X-RAY CRYSTALLOGRAPHY (2.10 ANGSTROMS) OF 72-155 IN COMPLEX WITH ZINC</scope>
    <scope>FUNCTION</scope>
    <scope>MUTAGENESIS OF 149-GLY--PRO-151</scope>
</reference>
<protein>
    <recommendedName>
        <fullName>Nuclear receptor subfamily 6 group A member 1</fullName>
    </recommendedName>
    <alternativeName>
        <fullName evidence="10">Germ cell nuclear factor</fullName>
        <shortName evidence="10">GCNF</shortName>
        <shortName>mGCNF</shortName>
    </alternativeName>
    <alternativeName>
        <fullName evidence="11">Retinoid receptor-related testis-specific receptor</fullName>
        <shortName evidence="11">RTR</shortName>
    </alternativeName>
</protein>
<evidence type="ECO:0000255" key="1">
    <source>
        <dbReference type="PROSITE-ProRule" id="PRU00407"/>
    </source>
</evidence>
<evidence type="ECO:0000255" key="2">
    <source>
        <dbReference type="PROSITE-ProRule" id="PRU01189"/>
    </source>
</evidence>
<evidence type="ECO:0000256" key="3">
    <source>
        <dbReference type="SAM" id="MobiDB-lite"/>
    </source>
</evidence>
<evidence type="ECO:0000269" key="4">
    <source>
    </source>
</evidence>
<evidence type="ECO:0000269" key="5">
    <source>
    </source>
</evidence>
<evidence type="ECO:0000269" key="6">
    <source>
    </source>
</evidence>
<evidence type="ECO:0000269" key="7">
    <source>
    </source>
</evidence>
<evidence type="ECO:0000269" key="8">
    <source>
    </source>
</evidence>
<evidence type="ECO:0000269" key="9">
    <source>
    </source>
</evidence>
<evidence type="ECO:0000303" key="10">
    <source>
    </source>
</evidence>
<evidence type="ECO:0000303" key="11">
    <source>
    </source>
</evidence>
<evidence type="ECO:0000305" key="12"/>
<evidence type="ECO:0007744" key="13">
    <source>
        <dbReference type="PDB" id="5KRB"/>
    </source>
</evidence>
<evidence type="ECO:0007829" key="14">
    <source>
        <dbReference type="PDB" id="5KRB"/>
    </source>
</evidence>
<accession>Q64249</accession>
<accession>A2AQL8</accession>
<accession>A2AQM1</accession>
<accession>Q687Z3</accession>
<sequence length="495" mass="55976">MERDERPPSGGGGGGGSAGFLEPPAALPPPPRNGFCQDELAELDPGTNGETDSLTLGQGHIPVSVPDDRAEQRTCLICGDRATGLHYGIISCEGCKGFFKRSICNKRVYRCSRDKNCVMSRKQRNRCQYCRLLKCLQMGMNRKAIREDGMPGGRNKSIGPVQISEEEIERIMSGQEFEEEANHWSNHGDSDHSSPGNRASESNQPSPGSTLSSSRSVELNGFMAFRDQYMGMSVPPHYQYIPHLFSYSGHSPLLPPQARSLDPQSYSLIHQLMSAEDLEPLGTPMLIEDGYAVTQAELFALLCRLADELLFRQIAWIKKLPFFCELSIKDYTCLLSSTWQELILLSSLTVYSKQIFGELADVTAKYSPSDEELHRFSDEGMEVIERLIYLYHKFHQLKVSNEEYACMKAINFLNQDIRGLTSASQLEQLNKRYWYICQDFTEYKYTHQPNRFPDLMMCLPEIRYIAGKMVNVPLEQLPLLFKVVLHSCKTSTVKE</sequence>
<gene>
    <name type="primary">Nr6a1</name>
    <name evidence="10" type="synonym">Gcnf</name>
</gene>
<organism>
    <name type="scientific">Mus musculus</name>
    <name type="common">Mouse</name>
    <dbReference type="NCBI Taxonomy" id="10090"/>
    <lineage>
        <taxon>Eukaryota</taxon>
        <taxon>Metazoa</taxon>
        <taxon>Chordata</taxon>
        <taxon>Craniata</taxon>
        <taxon>Vertebrata</taxon>
        <taxon>Euteleostomi</taxon>
        <taxon>Mammalia</taxon>
        <taxon>Eutheria</taxon>
        <taxon>Euarchontoglires</taxon>
        <taxon>Glires</taxon>
        <taxon>Rodentia</taxon>
        <taxon>Myomorpha</taxon>
        <taxon>Muroidea</taxon>
        <taxon>Muridae</taxon>
        <taxon>Murinae</taxon>
        <taxon>Mus</taxon>
        <taxon>Mus</taxon>
    </lineage>
</organism>
<feature type="chain" id="PRO_0000053742" description="Nuclear receptor subfamily 6 group A member 1">
    <location>
        <begin position="1"/>
        <end position="495"/>
    </location>
</feature>
<feature type="domain" description="NR LBD" evidence="2">
    <location>
        <begin position="264"/>
        <end position="495"/>
    </location>
</feature>
<feature type="DNA-binding region" description="Nuclear receptor" evidence="1">
    <location>
        <begin position="72"/>
        <end position="147"/>
    </location>
</feature>
<feature type="zinc finger region" description="NR C4-type" evidence="1">
    <location>
        <begin position="75"/>
        <end position="95"/>
    </location>
</feature>
<feature type="zinc finger region" description="NR C4-type" evidence="1">
    <location>
        <begin position="111"/>
        <end position="135"/>
    </location>
</feature>
<feature type="region of interest" description="Disordered" evidence="3">
    <location>
        <begin position="1"/>
        <end position="34"/>
    </location>
</feature>
<feature type="region of interest" description="Disordered" evidence="3">
    <location>
        <begin position="145"/>
        <end position="165"/>
    </location>
</feature>
<feature type="region of interest" description="Disordered" evidence="3">
    <location>
        <begin position="177"/>
        <end position="214"/>
    </location>
</feature>
<feature type="region of interest" description="Sufficient for interaction with UIMC1" evidence="7">
    <location>
        <begin position="187"/>
        <end position="268"/>
    </location>
</feature>
<feature type="compositionally biased region" description="Gly residues" evidence="3">
    <location>
        <begin position="9"/>
        <end position="18"/>
    </location>
</feature>
<feature type="compositionally biased region" description="Basic and acidic residues" evidence="3">
    <location>
        <begin position="180"/>
        <end position="192"/>
    </location>
</feature>
<feature type="compositionally biased region" description="Low complexity" evidence="3">
    <location>
        <begin position="202"/>
        <end position="214"/>
    </location>
</feature>
<feature type="binding site" evidence="6 13">
    <location>
        <position position="75"/>
    </location>
    <ligand>
        <name>Zn(2+)</name>
        <dbReference type="ChEBI" id="CHEBI:29105"/>
        <label>1</label>
    </ligand>
</feature>
<feature type="binding site" evidence="6 13">
    <location>
        <position position="78"/>
    </location>
    <ligand>
        <name>Zn(2+)</name>
        <dbReference type="ChEBI" id="CHEBI:29105"/>
        <label>1</label>
    </ligand>
</feature>
<feature type="binding site" evidence="6 13">
    <location>
        <position position="92"/>
    </location>
    <ligand>
        <name>Zn(2+)</name>
        <dbReference type="ChEBI" id="CHEBI:29105"/>
        <label>1</label>
    </ligand>
</feature>
<feature type="binding site" evidence="6 13">
    <location>
        <position position="95"/>
    </location>
    <ligand>
        <name>Zn(2+)</name>
        <dbReference type="ChEBI" id="CHEBI:29105"/>
        <label>1</label>
    </ligand>
</feature>
<feature type="binding site" evidence="6 13">
    <location>
        <position position="111"/>
    </location>
    <ligand>
        <name>Zn(2+)</name>
        <dbReference type="ChEBI" id="CHEBI:29105"/>
        <label>2</label>
    </ligand>
</feature>
<feature type="binding site" evidence="6 13">
    <location>
        <position position="117"/>
    </location>
    <ligand>
        <name>Zn(2+)</name>
        <dbReference type="ChEBI" id="CHEBI:29105"/>
        <label>2</label>
    </ligand>
</feature>
<feature type="binding site" evidence="6 13">
    <location>
        <position position="127"/>
    </location>
    <ligand>
        <name>Zn(2+)</name>
        <dbReference type="ChEBI" id="CHEBI:29105"/>
        <label>2</label>
    </ligand>
</feature>
<feature type="binding site" evidence="6 13">
    <location>
        <position position="130"/>
    </location>
    <ligand>
        <name>Zn(2+)</name>
        <dbReference type="ChEBI" id="CHEBI:29105"/>
        <label>2</label>
    </ligand>
</feature>
<feature type="splice variant" id="VSP_025928" description="In isoform 3." evidence="12">
    <location>
        <begin position="1"/>
        <end position="57"/>
    </location>
</feature>
<feature type="splice variant" id="VSP_025929" description="In isoform 2." evidence="12">
    <location>
        <begin position="48"/>
        <end position="62"/>
    </location>
</feature>
<feature type="splice variant" id="VSP_025930" description="In isoform 3." evidence="12">
    <original>QGHIP</original>
    <variation>METWE</variation>
    <location>
        <begin position="58"/>
        <end position="62"/>
    </location>
</feature>
<feature type="splice variant" id="VSP_025931" description="In isoform 2." evidence="12">
    <original>V</original>
    <variation>I</variation>
    <location>
        <position position="63"/>
    </location>
</feature>
<feature type="mutagenesis site" description="Increased DNA-binding to target genes." evidence="6">
    <original>GMP</original>
    <variation>RMR</variation>
    <location>
        <begin position="149"/>
        <end position="151"/>
    </location>
</feature>
<feature type="mutagenesis site" description="Abolishes interaction with RXRIP110." evidence="5">
    <original>SY</original>
    <variation>GG</variation>
    <location>
        <begin position="246"/>
        <end position="247"/>
    </location>
</feature>
<feature type="mutagenesis site" description="Does not abolish interaction with RXRIP110." evidence="5">
    <original>LP</original>
    <variation>AA</variation>
    <location>
        <begin position="254"/>
        <end position="255"/>
    </location>
</feature>
<feature type="mutagenesis site" description="Does not abolish interaction with RXRIP110." evidence="5">
    <original>SY</original>
    <variation>AA</variation>
    <location>
        <begin position="265"/>
        <end position="266"/>
    </location>
</feature>
<feature type="turn" evidence="14">
    <location>
        <begin position="76"/>
        <end position="78"/>
    </location>
</feature>
<feature type="strand" evidence="14">
    <location>
        <begin position="84"/>
        <end position="86"/>
    </location>
</feature>
<feature type="helix" evidence="14">
    <location>
        <begin position="93"/>
        <end position="104"/>
    </location>
</feature>
<feature type="turn" evidence="14">
    <location>
        <begin position="121"/>
        <end position="123"/>
    </location>
</feature>
<feature type="helix" evidence="14">
    <location>
        <begin position="124"/>
        <end position="126"/>
    </location>
</feature>
<feature type="helix" evidence="14">
    <location>
        <begin position="128"/>
        <end position="138"/>
    </location>
</feature>
<feature type="helix" evidence="14">
    <location>
        <begin position="142"/>
        <end position="144"/>
    </location>
</feature>
<dbReference type="EMBL" id="U14666">
    <property type="protein sequence ID" value="AAA92682.1"/>
    <property type="molecule type" value="mRNA"/>
</dbReference>
<dbReference type="EMBL" id="U09563">
    <property type="protein sequence ID" value="AAA64746.1"/>
    <property type="molecule type" value="mRNA"/>
</dbReference>
<dbReference type="EMBL" id="AF254821">
    <property type="protein sequence ID" value="AAG24485.1"/>
    <property type="molecule type" value="Genomic_DNA"/>
</dbReference>
<dbReference type="EMBL" id="AF254575">
    <property type="protein sequence ID" value="AAG24485.1"/>
    <property type="status" value="JOINED"/>
    <property type="molecule type" value="Genomic_DNA"/>
</dbReference>
<dbReference type="EMBL" id="AF254815">
    <property type="protein sequence ID" value="AAG24485.1"/>
    <property type="status" value="JOINED"/>
    <property type="molecule type" value="Genomic_DNA"/>
</dbReference>
<dbReference type="EMBL" id="AF254816">
    <property type="protein sequence ID" value="AAG24485.1"/>
    <property type="status" value="JOINED"/>
    <property type="molecule type" value="Genomic_DNA"/>
</dbReference>
<dbReference type="EMBL" id="AF254817">
    <property type="protein sequence ID" value="AAG24485.1"/>
    <property type="status" value="JOINED"/>
    <property type="molecule type" value="Genomic_DNA"/>
</dbReference>
<dbReference type="EMBL" id="AF254818">
    <property type="protein sequence ID" value="AAG24485.1"/>
    <property type="status" value="JOINED"/>
    <property type="molecule type" value="Genomic_DNA"/>
</dbReference>
<dbReference type="EMBL" id="AF254819">
    <property type="protein sequence ID" value="AAG24485.1"/>
    <property type="status" value="JOINED"/>
    <property type="molecule type" value="Genomic_DNA"/>
</dbReference>
<dbReference type="EMBL" id="AF254820">
    <property type="protein sequence ID" value="AAG24485.1"/>
    <property type="status" value="JOINED"/>
    <property type="molecule type" value="Genomic_DNA"/>
</dbReference>
<dbReference type="EMBL" id="AF390896">
    <property type="protein sequence ID" value="AAM55193.1"/>
    <property type="molecule type" value="mRNA"/>
</dbReference>
<dbReference type="EMBL" id="AF390900">
    <property type="protein sequence ID" value="AAM95878.1"/>
    <property type="molecule type" value="Genomic_DNA"/>
</dbReference>
<dbReference type="EMBL" id="AF390897">
    <property type="protein sequence ID" value="AAM95878.1"/>
    <property type="status" value="JOINED"/>
    <property type="molecule type" value="Genomic_DNA"/>
</dbReference>
<dbReference type="EMBL" id="AF390898">
    <property type="protein sequence ID" value="AAM95878.1"/>
    <property type="status" value="JOINED"/>
    <property type="molecule type" value="Genomic_DNA"/>
</dbReference>
<dbReference type="EMBL" id="AF390899">
    <property type="protein sequence ID" value="AAM95878.1"/>
    <property type="status" value="JOINED"/>
    <property type="molecule type" value="Genomic_DNA"/>
</dbReference>
<dbReference type="EMBL" id="AL844842">
    <property type="status" value="NOT_ANNOTATED_CDS"/>
    <property type="molecule type" value="Genomic_DNA"/>
</dbReference>
<dbReference type="EMBL" id="AL935155">
    <property type="status" value="NOT_ANNOTATED_CDS"/>
    <property type="molecule type" value="Genomic_DNA"/>
</dbReference>
<dbReference type="CCDS" id="CCDS16012.1">
    <molecule id="Q64249-1"/>
</dbReference>
<dbReference type="CCDS" id="CCDS50581.1">
    <molecule id="Q64249-3"/>
</dbReference>
<dbReference type="PIR" id="A57053">
    <property type="entry name" value="A57053"/>
</dbReference>
<dbReference type="RefSeq" id="NP_001153020.1">
    <molecule id="Q64249-3"/>
    <property type="nucleotide sequence ID" value="NM_001159548.1"/>
</dbReference>
<dbReference type="RefSeq" id="NP_034394.1">
    <molecule id="Q64249-1"/>
    <property type="nucleotide sequence ID" value="NM_010264.5"/>
</dbReference>
<dbReference type="PDB" id="5KRB">
    <property type="method" value="X-ray"/>
    <property type="resolution" value="2.10 A"/>
    <property type="chains" value="B/G=72-155"/>
</dbReference>
<dbReference type="PDBsum" id="5KRB"/>
<dbReference type="SMR" id="Q64249"/>
<dbReference type="BioGRID" id="199868">
    <property type="interactions" value="20"/>
</dbReference>
<dbReference type="FunCoup" id="Q64249">
    <property type="interactions" value="454"/>
</dbReference>
<dbReference type="STRING" id="10090.ENSMUSP00000108498"/>
<dbReference type="GlyGen" id="Q64249">
    <property type="glycosylation" value="1 site"/>
</dbReference>
<dbReference type="PhosphoSitePlus" id="Q64249"/>
<dbReference type="PaxDb" id="10090-ENSMUSP00000108498"/>
<dbReference type="ProteomicsDB" id="252849">
    <molecule id="Q64249-1"/>
</dbReference>
<dbReference type="ProteomicsDB" id="252850">
    <molecule id="Q64249-2"/>
</dbReference>
<dbReference type="Antibodypedia" id="16337">
    <property type="antibodies" value="333 antibodies from 34 providers"/>
</dbReference>
<dbReference type="DNASU" id="14536"/>
<dbReference type="Ensembl" id="ENSMUST00000076275.11">
    <molecule id="Q64249-1"/>
    <property type="protein sequence ID" value="ENSMUSP00000075624.5"/>
    <property type="gene ID" value="ENSMUSG00000063972.14"/>
</dbReference>
<dbReference type="Ensembl" id="ENSMUST00000112877.8">
    <molecule id="Q64249-1"/>
    <property type="protein sequence ID" value="ENSMUSP00000108498.2"/>
    <property type="gene ID" value="ENSMUSG00000063972.14"/>
</dbReference>
<dbReference type="Ensembl" id="ENSMUST00000168098.8">
    <molecule id="Q64249-3"/>
    <property type="protein sequence ID" value="ENSMUSP00000126009.2"/>
    <property type="gene ID" value="ENSMUSG00000063972.14"/>
</dbReference>
<dbReference type="GeneID" id="14536"/>
<dbReference type="KEGG" id="mmu:14536"/>
<dbReference type="UCSC" id="uc012bus.1">
    <molecule id="Q64249-3"/>
    <property type="organism name" value="mouse"/>
</dbReference>
<dbReference type="UCSC" id="uc012buu.1">
    <molecule id="Q64249-1"/>
    <property type="organism name" value="mouse"/>
</dbReference>
<dbReference type="AGR" id="MGI:1352459"/>
<dbReference type="CTD" id="2649"/>
<dbReference type="MGI" id="MGI:1352459">
    <property type="gene designation" value="Nr6a1"/>
</dbReference>
<dbReference type="VEuPathDB" id="HostDB:ENSMUSG00000063972"/>
<dbReference type="eggNOG" id="KOG3575">
    <property type="taxonomic scope" value="Eukaryota"/>
</dbReference>
<dbReference type="GeneTree" id="ENSGT00940000157936"/>
<dbReference type="HOGENOM" id="CLU_007368_6_1_1"/>
<dbReference type="InParanoid" id="Q64249"/>
<dbReference type="OMA" id="GYYACSV"/>
<dbReference type="OrthoDB" id="10006908at2759"/>
<dbReference type="PhylomeDB" id="Q64249"/>
<dbReference type="TreeFam" id="TF350737"/>
<dbReference type="Reactome" id="R-MMU-383280">
    <property type="pathway name" value="Nuclear Receptor transcription pathway"/>
</dbReference>
<dbReference type="BioGRID-ORCS" id="14536">
    <property type="hits" value="5 hits in 79 CRISPR screens"/>
</dbReference>
<dbReference type="ChiTaRS" id="Nr6a1">
    <property type="organism name" value="mouse"/>
</dbReference>
<dbReference type="PRO" id="PR:Q64249"/>
<dbReference type="Proteomes" id="UP000000589">
    <property type="component" value="Chromosome 2"/>
</dbReference>
<dbReference type="RNAct" id="Q64249">
    <property type="molecule type" value="protein"/>
</dbReference>
<dbReference type="Bgee" id="ENSMUSG00000063972">
    <property type="expression patterns" value="Expressed in primitive streak and 188 other cell types or tissues"/>
</dbReference>
<dbReference type="ExpressionAtlas" id="Q64249">
    <property type="expression patterns" value="baseline and differential"/>
</dbReference>
<dbReference type="GO" id="GO:0005634">
    <property type="term" value="C:nucleus"/>
    <property type="evidence" value="ECO:0007669"/>
    <property type="project" value="UniProtKB-SubCell"/>
</dbReference>
<dbReference type="GO" id="GO:0005667">
    <property type="term" value="C:transcription regulator complex"/>
    <property type="evidence" value="ECO:0000314"/>
    <property type="project" value="MGI"/>
</dbReference>
<dbReference type="GO" id="GO:0001228">
    <property type="term" value="F:DNA-binding transcription activator activity, RNA polymerase II-specific"/>
    <property type="evidence" value="ECO:0000314"/>
    <property type="project" value="NTNU_SB"/>
</dbReference>
<dbReference type="GO" id="GO:0001217">
    <property type="term" value="F:DNA-binding transcription repressor activity"/>
    <property type="evidence" value="ECO:0000314"/>
    <property type="project" value="UniProtKB"/>
</dbReference>
<dbReference type="GO" id="GO:0042803">
    <property type="term" value="F:protein homodimerization activity"/>
    <property type="evidence" value="ECO:0000314"/>
    <property type="project" value="UniProtKB"/>
</dbReference>
<dbReference type="GO" id="GO:0000978">
    <property type="term" value="F:RNA polymerase II cis-regulatory region sequence-specific DNA binding"/>
    <property type="evidence" value="ECO:0000314"/>
    <property type="project" value="MGI"/>
</dbReference>
<dbReference type="GO" id="GO:0043565">
    <property type="term" value="F:sequence-specific DNA binding"/>
    <property type="evidence" value="ECO:0000314"/>
    <property type="project" value="UniProtKB"/>
</dbReference>
<dbReference type="GO" id="GO:0008270">
    <property type="term" value="F:zinc ion binding"/>
    <property type="evidence" value="ECO:0007669"/>
    <property type="project" value="UniProtKB-KW"/>
</dbReference>
<dbReference type="GO" id="GO:0030154">
    <property type="term" value="P:cell differentiation"/>
    <property type="evidence" value="ECO:0007669"/>
    <property type="project" value="UniProtKB-KW"/>
</dbReference>
<dbReference type="GO" id="GO:0007276">
    <property type="term" value="P:gamete generation"/>
    <property type="evidence" value="ECO:0000270"/>
    <property type="project" value="UniProtKB"/>
</dbReference>
<dbReference type="GO" id="GO:0000122">
    <property type="term" value="P:negative regulation of transcription by RNA polymerase II"/>
    <property type="evidence" value="ECO:0000314"/>
    <property type="project" value="UniProtKB"/>
</dbReference>
<dbReference type="GO" id="GO:2000741">
    <property type="term" value="P:positive regulation of mesenchymal stem cell differentiation"/>
    <property type="evidence" value="ECO:0000314"/>
    <property type="project" value="UniProtKB"/>
</dbReference>
<dbReference type="GO" id="GO:0045944">
    <property type="term" value="P:positive regulation of transcription by RNA polymerase II"/>
    <property type="evidence" value="ECO:0000314"/>
    <property type="project" value="NTNU_SB"/>
</dbReference>
<dbReference type="GO" id="GO:0007283">
    <property type="term" value="P:spermatogenesis"/>
    <property type="evidence" value="ECO:0007669"/>
    <property type="project" value="UniProtKB-KW"/>
</dbReference>
<dbReference type="CDD" id="cd07169">
    <property type="entry name" value="NR_DBD_GCNF_like"/>
    <property type="match status" value="1"/>
</dbReference>
<dbReference type="CDD" id="cd06953">
    <property type="entry name" value="NR_LBD_DHR4_like"/>
    <property type="match status" value="1"/>
</dbReference>
<dbReference type="FunFam" id="3.30.50.10:FF:000006">
    <property type="entry name" value="Nuclear receptor subfamily 5 group A member"/>
    <property type="match status" value="1"/>
</dbReference>
<dbReference type="FunFam" id="1.10.565.10:FF:000015">
    <property type="entry name" value="Nuclear receptor subfamily 6 group A member 1"/>
    <property type="match status" value="1"/>
</dbReference>
<dbReference type="Gene3D" id="3.30.50.10">
    <property type="entry name" value="Erythroid Transcription Factor GATA-1, subunit A"/>
    <property type="match status" value="1"/>
</dbReference>
<dbReference type="Gene3D" id="1.10.565.10">
    <property type="entry name" value="Retinoid X Receptor"/>
    <property type="match status" value="1"/>
</dbReference>
<dbReference type="InterPro" id="IPR035500">
    <property type="entry name" value="NHR-like_dom_sf"/>
</dbReference>
<dbReference type="InterPro" id="IPR000536">
    <property type="entry name" value="Nucl_hrmn_rcpt_lig-bd"/>
</dbReference>
<dbReference type="InterPro" id="IPR050200">
    <property type="entry name" value="Nuclear_hormone_rcpt_NR3"/>
</dbReference>
<dbReference type="InterPro" id="IPR001723">
    <property type="entry name" value="Nuclear_hrmn_rcpt"/>
</dbReference>
<dbReference type="InterPro" id="IPR001628">
    <property type="entry name" value="Znf_hrmn_rcpt"/>
</dbReference>
<dbReference type="InterPro" id="IPR013088">
    <property type="entry name" value="Znf_NHR/GATA"/>
</dbReference>
<dbReference type="PANTHER" id="PTHR48092">
    <property type="entry name" value="KNIRPS-RELATED PROTEIN-RELATED"/>
    <property type="match status" value="1"/>
</dbReference>
<dbReference type="Pfam" id="PF00104">
    <property type="entry name" value="Hormone_recep"/>
    <property type="match status" value="1"/>
</dbReference>
<dbReference type="Pfam" id="PF00105">
    <property type="entry name" value="zf-C4"/>
    <property type="match status" value="1"/>
</dbReference>
<dbReference type="PRINTS" id="PR00398">
    <property type="entry name" value="STRDHORMONER"/>
</dbReference>
<dbReference type="PRINTS" id="PR00047">
    <property type="entry name" value="STROIDFINGER"/>
</dbReference>
<dbReference type="SMART" id="SM00430">
    <property type="entry name" value="HOLI"/>
    <property type="match status" value="1"/>
</dbReference>
<dbReference type="SMART" id="SM00399">
    <property type="entry name" value="ZnF_C4"/>
    <property type="match status" value="1"/>
</dbReference>
<dbReference type="SUPFAM" id="SSF57716">
    <property type="entry name" value="Glucocorticoid receptor-like (DNA-binding domain)"/>
    <property type="match status" value="1"/>
</dbReference>
<dbReference type="SUPFAM" id="SSF48508">
    <property type="entry name" value="Nuclear receptor ligand-binding domain"/>
    <property type="match status" value="1"/>
</dbReference>
<dbReference type="PROSITE" id="PS51843">
    <property type="entry name" value="NR_LBD"/>
    <property type="match status" value="1"/>
</dbReference>
<dbReference type="PROSITE" id="PS00031">
    <property type="entry name" value="NUCLEAR_REC_DBD_1"/>
    <property type="match status" value="1"/>
</dbReference>
<dbReference type="PROSITE" id="PS51030">
    <property type="entry name" value="NUCLEAR_REC_DBD_2"/>
    <property type="match status" value="1"/>
</dbReference>
<proteinExistence type="evidence at protein level"/>
<keyword id="KW-0002">3D-structure</keyword>
<keyword id="KW-0025">Alternative splicing</keyword>
<keyword id="KW-0217">Developmental protein</keyword>
<keyword id="KW-0221">Differentiation</keyword>
<keyword id="KW-0238">DNA-binding</keyword>
<keyword id="KW-0479">Metal-binding</keyword>
<keyword id="KW-0539">Nucleus</keyword>
<keyword id="KW-0675">Receptor</keyword>
<keyword id="KW-1185">Reference proteome</keyword>
<keyword id="KW-0744">Spermatogenesis</keyword>
<keyword id="KW-0804">Transcription</keyword>
<keyword id="KW-0805">Transcription regulation</keyword>
<keyword id="KW-0862">Zinc</keyword>
<keyword id="KW-0863">Zinc-finger</keyword>